<comment type="function">
    <text evidence="1">The AROM polypeptide catalyzes 5 consecutive enzymatic reactions in prechorismate polyaromatic amino acid biosynthesis.</text>
</comment>
<comment type="catalytic activity">
    <reaction evidence="1">
        <text>7-phospho-2-dehydro-3-deoxy-D-arabino-heptonate = 3-dehydroquinate + phosphate</text>
        <dbReference type="Rhea" id="RHEA:21968"/>
        <dbReference type="ChEBI" id="CHEBI:32364"/>
        <dbReference type="ChEBI" id="CHEBI:43474"/>
        <dbReference type="ChEBI" id="CHEBI:58394"/>
        <dbReference type="EC" id="4.2.3.4"/>
    </reaction>
</comment>
<comment type="catalytic activity">
    <reaction evidence="1">
        <text>3-dehydroquinate = 3-dehydroshikimate + H2O</text>
        <dbReference type="Rhea" id="RHEA:21096"/>
        <dbReference type="ChEBI" id="CHEBI:15377"/>
        <dbReference type="ChEBI" id="CHEBI:16630"/>
        <dbReference type="ChEBI" id="CHEBI:32364"/>
        <dbReference type="EC" id="4.2.1.10"/>
    </reaction>
</comment>
<comment type="catalytic activity">
    <reaction evidence="1">
        <text>shikimate + NADP(+) = 3-dehydroshikimate + NADPH + H(+)</text>
        <dbReference type="Rhea" id="RHEA:17737"/>
        <dbReference type="ChEBI" id="CHEBI:15378"/>
        <dbReference type="ChEBI" id="CHEBI:16630"/>
        <dbReference type="ChEBI" id="CHEBI:36208"/>
        <dbReference type="ChEBI" id="CHEBI:57783"/>
        <dbReference type="ChEBI" id="CHEBI:58349"/>
        <dbReference type="EC" id="1.1.1.25"/>
    </reaction>
</comment>
<comment type="catalytic activity">
    <reaction evidence="1">
        <text>shikimate + ATP = 3-phosphoshikimate + ADP + H(+)</text>
        <dbReference type="Rhea" id="RHEA:13121"/>
        <dbReference type="ChEBI" id="CHEBI:15378"/>
        <dbReference type="ChEBI" id="CHEBI:30616"/>
        <dbReference type="ChEBI" id="CHEBI:36208"/>
        <dbReference type="ChEBI" id="CHEBI:145989"/>
        <dbReference type="ChEBI" id="CHEBI:456216"/>
        <dbReference type="EC" id="2.7.1.71"/>
    </reaction>
</comment>
<comment type="catalytic activity">
    <reaction evidence="1">
        <text>3-phosphoshikimate + phosphoenolpyruvate = 5-O-(1-carboxyvinyl)-3-phosphoshikimate + phosphate</text>
        <dbReference type="Rhea" id="RHEA:21256"/>
        <dbReference type="ChEBI" id="CHEBI:43474"/>
        <dbReference type="ChEBI" id="CHEBI:57701"/>
        <dbReference type="ChEBI" id="CHEBI:58702"/>
        <dbReference type="ChEBI" id="CHEBI:145989"/>
        <dbReference type="EC" id="2.5.1.19"/>
    </reaction>
</comment>
<comment type="cofactor">
    <cofactor>
        <name>Zn(2+)</name>
        <dbReference type="ChEBI" id="CHEBI:29105"/>
    </cofactor>
    <text>Binds 2 Zn(2+) ions per subunit.</text>
</comment>
<comment type="pathway">
    <text evidence="1">Metabolic intermediate biosynthesis; chorismate biosynthesis; chorismate from D-erythrose 4-phosphate and phosphoenolpyruvate: step 2/7.</text>
</comment>
<comment type="pathway">
    <text evidence="1">Metabolic intermediate biosynthesis; chorismate biosynthesis; chorismate from D-erythrose 4-phosphate and phosphoenolpyruvate: step 3/7.</text>
</comment>
<comment type="pathway">
    <text evidence="1">Metabolic intermediate biosynthesis; chorismate biosynthesis; chorismate from D-erythrose 4-phosphate and phosphoenolpyruvate: step 4/7.</text>
</comment>
<comment type="pathway">
    <text evidence="1">Metabolic intermediate biosynthesis; chorismate biosynthesis; chorismate from D-erythrose 4-phosphate and phosphoenolpyruvate: step 5/7.</text>
</comment>
<comment type="pathway">
    <text evidence="1">Metabolic intermediate biosynthesis; chorismate biosynthesis; chorismate from D-erythrose 4-phosphate and phosphoenolpyruvate: step 6/7.</text>
</comment>
<comment type="subunit">
    <text evidence="1">Homodimer.</text>
</comment>
<comment type="subcellular location">
    <subcellularLocation>
        <location evidence="1">Cytoplasm</location>
    </subcellularLocation>
</comment>
<comment type="similarity">
    <text evidence="1">In the N-terminal section; belongs to the sugar phosphate cyclases superfamily. Dehydroquinate synthase family.</text>
</comment>
<comment type="similarity">
    <text evidence="1">In the 2nd section; belongs to the EPSP synthase family.</text>
</comment>
<comment type="similarity">
    <text evidence="1">In the 3rd section; belongs to the shikimate kinase family.</text>
</comment>
<comment type="similarity">
    <text evidence="1">In the 4th section; belongs to the type-I 3-dehydroquinase family.</text>
</comment>
<comment type="similarity">
    <text evidence="1">In the C-terminal section; belongs to the shikimate dehydrogenase family.</text>
</comment>
<sequence length="1589" mass="172336">MAAPTTIKILGRDSIVADFGIWKRHVADDLLTNCSSSTYILISDTTLTPLYVPSFQAAFENAASGLTPKPRLLTYAIPPGELSKSRQTKADIEDWMLSRQPPCGRDTVIIALGGGVIGDLIGYVAATYMRGVRFVQVPTTLLAMVDSSIGGKTAIDTPHGKNLIGAIWQPQKIYLDMEFLNTLPEREFINGMAEVIKTAAISSEEDFAALEKNADAILSAVKSENTPERPRFGGIQEILKLTILASARFKADVVSKDEREGGLRNLLNFGHSIGHAIEGILAPQILHGECVAIGMVKEAELARHLGLLKNVAVPRLVKCLASYGLPTSLKDSRIRRLSAGKHCSVDQLLAFMAVDKKNAGPKKKVVLLSAIGRTHEQQASVVSNEDIKIVLAPSIEVSPGVPKSLQVTCTPPGSKSISNRALVLAALGSGTCRIKNLLHSDDTEVMLNALERLGAATFSWEEEGEVLVVHGNGGTLKASPEELYLGNAGTASRFLTTVATLANNGTVSSTVLTGNARMKQRPIGALVDSLRANGAGVEYLETNGCLPLKIDASGGFAGGEISLAAKISSQYVSSLLMCAPYAKEPVTLKLVGGKPISQQYIDMTTAMMRSFGIDVKRSTTEEHTYHIPQGKYVNPAEYIIESDASSATYPLAVAAITGTTCTIPNIGSKSLQGDARFAVDVLRPMGCEVSQSEYSTTVTAPKDGVLKPLPNVDMEPMTDAFLTASVLAAVATGSPNRTTRIFGIANQRVKECNRIRAMKDELAKFGVICREHDDGLEIDGIDRSTLLQPPHGVHCYDDHRVAMSFSVLSLTAPKPTLILEKECVGKTWPGWWDTLAQLFKAKLEGVELKSSTKQKAEKPAASIFIIGMRGAGKTTSGLWAAKALKRPFIDLDVELESTIGKTIPEIIKERGWEGFREAELALLQKVIREKPTGYVFACGGGIVETQEGRDLLVQYHKANGNVLLLMRDIKEVMDFLKIDKTRPAYVEDMMGVWLRRKPWYQQCSNFQFYSQQSTQDEMGRALESFSRFLRVITGEVDHLSLLKKKPQSFFVSLTLPDLRPSAEILGDVTLGSDAVELRVDLLVDPSSANDIPSVDYVAEQISMLRSRVSLPLVFTIRTKSQGGRFPDDAHDAALDLYRLAVRMGSEFVDLEVTFPEHILRAVTEMKGFSKIIASHHDVSGSLSWANGSWGQFYNKALQYGDIIKLVGVAKCLDDNIALRKFKTWAQDAHEIPVIAINMGEKGRLSRILNGFMTPVSHPKLPFKAAPGQLSAQDIRKGLSLMGEIEPRKFAIFGKPVSASRSPAMHNALFAQVGLPHAYSRLETDNVEDVREFIHAPDFGGASVTIPLKLDIMPLLDEISPEAQVIGAVNTIVPIPRGPGDMTGYPRLIGYNTDWQGMVRCLRHGKAISPSFADTAVPGLVIGGGGTARAAIHALYSMSYSPIYLIGRSEAKVAEMASTFPEKYSVQVLKDATSLENLPMVAIGTIPGDRPIDPSMREVLCRLFENAARVDSELSAKGEVPAKRVLLEMAYKPDITPLSQLASDSGWSTIPGLEALVGQGVHQFELWTGITPVYQDARAAVMNPGTDNRG</sequence>
<protein>
    <recommendedName>
        <fullName evidence="1">Pentafunctional AROM polypeptide</fullName>
    </recommendedName>
    <domain>
        <recommendedName>
            <fullName evidence="1">3-dehydroquinate synthase</fullName>
            <shortName evidence="1">DHQS</shortName>
            <ecNumber evidence="1">4.2.3.4</ecNumber>
        </recommendedName>
    </domain>
    <domain>
        <recommendedName>
            <fullName evidence="1">3-phosphoshikimate 1-carboxyvinyltransferase</fullName>
            <ecNumber evidence="1">2.5.1.19</ecNumber>
        </recommendedName>
        <alternativeName>
            <fullName evidence="1">5-enolpyruvylshikimate-3-phosphate synthase</fullName>
            <shortName evidence="1">EPSP synthase</shortName>
            <shortName evidence="1">EPSPS</shortName>
        </alternativeName>
    </domain>
    <domain>
        <recommendedName>
            <fullName evidence="1">Shikimate kinase</fullName>
            <shortName evidence="1">SK</shortName>
            <ecNumber evidence="1">2.7.1.71</ecNumber>
        </recommendedName>
    </domain>
    <domain>
        <recommendedName>
            <fullName evidence="1">3-dehydroquinate dehydratase</fullName>
            <shortName evidence="1">3-dehydroquinase</shortName>
            <ecNumber evidence="1">4.2.1.10</ecNumber>
        </recommendedName>
    </domain>
    <domain>
        <recommendedName>
            <fullName evidence="1">Shikimate dehydrogenase</fullName>
            <ecNumber evidence="1">1.1.1.25</ecNumber>
        </recommendedName>
    </domain>
</protein>
<keyword id="KW-0028">Amino-acid biosynthesis</keyword>
<keyword id="KW-0057">Aromatic amino acid biosynthesis</keyword>
<keyword id="KW-0067">ATP-binding</keyword>
<keyword id="KW-0963">Cytoplasm</keyword>
<keyword id="KW-0418">Kinase</keyword>
<keyword id="KW-0456">Lyase</keyword>
<keyword id="KW-0479">Metal-binding</keyword>
<keyword id="KW-0511">Multifunctional enzyme</keyword>
<keyword id="KW-0521">NADP</keyword>
<keyword id="KW-0547">Nucleotide-binding</keyword>
<keyword id="KW-0560">Oxidoreductase</keyword>
<keyword id="KW-0808">Transferase</keyword>
<keyword id="KW-0862">Zinc</keyword>
<dbReference type="EC" id="4.2.3.4" evidence="1"/>
<dbReference type="EC" id="2.5.1.19" evidence="1"/>
<dbReference type="EC" id="2.7.1.71" evidence="1"/>
<dbReference type="EC" id="4.2.1.10" evidence="1"/>
<dbReference type="EC" id="1.1.1.25" evidence="1"/>
<dbReference type="EMBL" id="ACFW01000030">
    <property type="protein sequence ID" value="EER26648.1"/>
    <property type="molecule type" value="Genomic_DNA"/>
</dbReference>
<dbReference type="RefSeq" id="XP_003068793.1">
    <property type="nucleotide sequence ID" value="XM_003068747.1"/>
</dbReference>
<dbReference type="SMR" id="C5PA86"/>
<dbReference type="VEuPathDB" id="FungiDB:CPC735_008210"/>
<dbReference type="HOGENOM" id="CLU_001201_1_2_1"/>
<dbReference type="OrthoDB" id="197068at2759"/>
<dbReference type="UniPathway" id="UPA00053">
    <property type="reaction ID" value="UER00085"/>
</dbReference>
<dbReference type="UniPathway" id="UPA00053">
    <property type="reaction ID" value="UER00086"/>
</dbReference>
<dbReference type="UniPathway" id="UPA00053">
    <property type="reaction ID" value="UER00087"/>
</dbReference>
<dbReference type="UniPathway" id="UPA00053">
    <property type="reaction ID" value="UER00088"/>
</dbReference>
<dbReference type="UniPathway" id="UPA00053">
    <property type="reaction ID" value="UER00089"/>
</dbReference>
<dbReference type="Proteomes" id="UP000009084">
    <property type="component" value="Unassembled WGS sequence"/>
</dbReference>
<dbReference type="GO" id="GO:0005737">
    <property type="term" value="C:cytoplasm"/>
    <property type="evidence" value="ECO:0007669"/>
    <property type="project" value="UniProtKB-SubCell"/>
</dbReference>
<dbReference type="GO" id="GO:0003855">
    <property type="term" value="F:3-dehydroquinate dehydratase activity"/>
    <property type="evidence" value="ECO:0007669"/>
    <property type="project" value="UniProtKB-UniRule"/>
</dbReference>
<dbReference type="GO" id="GO:0003856">
    <property type="term" value="F:3-dehydroquinate synthase activity"/>
    <property type="evidence" value="ECO:0007669"/>
    <property type="project" value="UniProtKB-UniRule"/>
</dbReference>
<dbReference type="GO" id="GO:0003866">
    <property type="term" value="F:3-phosphoshikimate 1-carboxyvinyltransferase activity"/>
    <property type="evidence" value="ECO:0007669"/>
    <property type="project" value="UniProtKB-UniRule"/>
</dbReference>
<dbReference type="GO" id="GO:0005524">
    <property type="term" value="F:ATP binding"/>
    <property type="evidence" value="ECO:0007669"/>
    <property type="project" value="UniProtKB-UniRule"/>
</dbReference>
<dbReference type="GO" id="GO:0046872">
    <property type="term" value="F:metal ion binding"/>
    <property type="evidence" value="ECO:0007669"/>
    <property type="project" value="UniProtKB-UniRule"/>
</dbReference>
<dbReference type="GO" id="GO:0004764">
    <property type="term" value="F:shikimate 3-dehydrogenase (NADP+) activity"/>
    <property type="evidence" value="ECO:0007669"/>
    <property type="project" value="UniProtKB-UniRule"/>
</dbReference>
<dbReference type="GO" id="GO:0004765">
    <property type="term" value="F:shikimate kinase activity"/>
    <property type="evidence" value="ECO:0007669"/>
    <property type="project" value="UniProtKB-UniRule"/>
</dbReference>
<dbReference type="GO" id="GO:0008652">
    <property type="term" value="P:amino acid biosynthetic process"/>
    <property type="evidence" value="ECO:0007669"/>
    <property type="project" value="UniProtKB-KW"/>
</dbReference>
<dbReference type="GO" id="GO:0009073">
    <property type="term" value="P:aromatic amino acid family biosynthetic process"/>
    <property type="evidence" value="ECO:0007669"/>
    <property type="project" value="UniProtKB-UniRule"/>
</dbReference>
<dbReference type="GO" id="GO:0009423">
    <property type="term" value="P:chorismate biosynthetic process"/>
    <property type="evidence" value="ECO:0007669"/>
    <property type="project" value="UniProtKB-UniRule"/>
</dbReference>
<dbReference type="CDD" id="cd00502">
    <property type="entry name" value="DHQase_I"/>
    <property type="match status" value="1"/>
</dbReference>
<dbReference type="CDD" id="cd08195">
    <property type="entry name" value="DHQS"/>
    <property type="match status" value="1"/>
</dbReference>
<dbReference type="CDD" id="cd01556">
    <property type="entry name" value="EPSP_synthase"/>
    <property type="match status" value="1"/>
</dbReference>
<dbReference type="CDD" id="cd01065">
    <property type="entry name" value="NAD_bind_Shikimate_DH"/>
    <property type="match status" value="1"/>
</dbReference>
<dbReference type="CDD" id="cd00464">
    <property type="entry name" value="SK"/>
    <property type="match status" value="1"/>
</dbReference>
<dbReference type="FunFam" id="1.20.1090.10:FF:000007">
    <property type="entry name" value="Pentafunctional AROM polypeptide"/>
    <property type="match status" value="1"/>
</dbReference>
<dbReference type="FunFam" id="3.20.20.70:FF:000135">
    <property type="entry name" value="Pentafunctional AROM polypeptide"/>
    <property type="match status" value="1"/>
</dbReference>
<dbReference type="FunFam" id="3.40.50.1970:FF:000007">
    <property type="entry name" value="Pentafunctional AROM polypeptide"/>
    <property type="match status" value="1"/>
</dbReference>
<dbReference type="FunFam" id="3.40.50.300:FF:001256">
    <property type="entry name" value="Pentafunctional AROM polypeptide"/>
    <property type="match status" value="1"/>
</dbReference>
<dbReference type="FunFam" id="3.65.10.10:FF:000007">
    <property type="entry name" value="Pentafunctional AROM polypeptide"/>
    <property type="match status" value="1"/>
</dbReference>
<dbReference type="FunFam" id="3.65.10.10:FF:000008">
    <property type="entry name" value="Pentafunctional AROM polypeptide"/>
    <property type="match status" value="1"/>
</dbReference>
<dbReference type="Gene3D" id="3.40.50.1970">
    <property type="match status" value="1"/>
</dbReference>
<dbReference type="Gene3D" id="3.20.20.70">
    <property type="entry name" value="Aldolase class I"/>
    <property type="match status" value="1"/>
</dbReference>
<dbReference type="Gene3D" id="1.20.1090.10">
    <property type="entry name" value="Dehydroquinate synthase-like - alpha domain"/>
    <property type="match status" value="1"/>
</dbReference>
<dbReference type="Gene3D" id="3.65.10.10">
    <property type="entry name" value="Enolpyruvate transferase domain"/>
    <property type="match status" value="2"/>
</dbReference>
<dbReference type="Gene3D" id="3.40.50.10860">
    <property type="entry name" value="Leucine Dehydrogenase, chain A, domain 1"/>
    <property type="match status" value="1"/>
</dbReference>
<dbReference type="Gene3D" id="3.40.50.720">
    <property type="entry name" value="NAD(P)-binding Rossmann-like Domain"/>
    <property type="match status" value="1"/>
</dbReference>
<dbReference type="Gene3D" id="3.40.50.300">
    <property type="entry name" value="P-loop containing nucleotide triphosphate hydrolases"/>
    <property type="match status" value="1"/>
</dbReference>
<dbReference type="HAMAP" id="MF_00210">
    <property type="entry name" value="EPSP_synth"/>
    <property type="match status" value="1"/>
</dbReference>
<dbReference type="HAMAP" id="MF_03143">
    <property type="entry name" value="Pentafunct_AroM"/>
    <property type="match status" value="1"/>
</dbReference>
<dbReference type="HAMAP" id="MF_00109">
    <property type="entry name" value="Shikimate_kinase"/>
    <property type="match status" value="1"/>
</dbReference>
<dbReference type="InterPro" id="IPR018508">
    <property type="entry name" value="3-dehydroquinate_DH_AS"/>
</dbReference>
<dbReference type="InterPro" id="IPR013785">
    <property type="entry name" value="Aldolase_TIM"/>
</dbReference>
<dbReference type="InterPro" id="IPR046346">
    <property type="entry name" value="Aminoacid_DH-like_N_sf"/>
</dbReference>
<dbReference type="InterPro" id="IPR016037">
    <property type="entry name" value="DHQ_synth_AroB"/>
</dbReference>
<dbReference type="InterPro" id="IPR030960">
    <property type="entry name" value="DHQS/DOIS_N"/>
</dbReference>
<dbReference type="InterPro" id="IPR056179">
    <property type="entry name" value="DHQS_C"/>
</dbReference>
<dbReference type="InterPro" id="IPR001381">
    <property type="entry name" value="DHquinase_I"/>
</dbReference>
<dbReference type="InterPro" id="IPR001986">
    <property type="entry name" value="Enolpyruvate_Tfrase_dom"/>
</dbReference>
<dbReference type="InterPro" id="IPR036968">
    <property type="entry name" value="Enolpyruvate_Tfrase_sf"/>
</dbReference>
<dbReference type="InterPro" id="IPR006264">
    <property type="entry name" value="EPSP_synthase"/>
</dbReference>
<dbReference type="InterPro" id="IPR023193">
    <property type="entry name" value="EPSP_synthase_CS"/>
</dbReference>
<dbReference type="InterPro" id="IPR036291">
    <property type="entry name" value="NAD(P)-bd_dom_sf"/>
</dbReference>
<dbReference type="InterPro" id="IPR027417">
    <property type="entry name" value="P-loop_NTPase"/>
</dbReference>
<dbReference type="InterPro" id="IPR008289">
    <property type="entry name" value="Pentafunct_AroM"/>
</dbReference>
<dbReference type="InterPro" id="IPR013792">
    <property type="entry name" value="RNA3'P_cycl/enolpyr_Trfase_a/b"/>
</dbReference>
<dbReference type="InterPro" id="IPR041121">
    <property type="entry name" value="SDH_C"/>
</dbReference>
<dbReference type="InterPro" id="IPR031322">
    <property type="entry name" value="Shikimate/glucono_kinase"/>
</dbReference>
<dbReference type="InterPro" id="IPR013708">
    <property type="entry name" value="Shikimate_DH-bd_N"/>
</dbReference>
<dbReference type="InterPro" id="IPR010110">
    <property type="entry name" value="Shikimate_DH_AroM-type"/>
</dbReference>
<dbReference type="InterPro" id="IPR000623">
    <property type="entry name" value="Shikimate_kinase/TSH1"/>
</dbReference>
<dbReference type="InterPro" id="IPR023000">
    <property type="entry name" value="Shikimate_kinase_CS"/>
</dbReference>
<dbReference type="NCBIfam" id="TIGR01356">
    <property type="entry name" value="aroA"/>
    <property type="match status" value="1"/>
</dbReference>
<dbReference type="NCBIfam" id="TIGR01357">
    <property type="entry name" value="aroB"/>
    <property type="match status" value="1"/>
</dbReference>
<dbReference type="NCBIfam" id="TIGR01093">
    <property type="entry name" value="aroD"/>
    <property type="match status" value="1"/>
</dbReference>
<dbReference type="NCBIfam" id="TIGR01809">
    <property type="entry name" value="Shik-DH-AROM"/>
    <property type="match status" value="1"/>
</dbReference>
<dbReference type="PANTHER" id="PTHR21090">
    <property type="entry name" value="AROM/DEHYDROQUINATE SYNTHASE"/>
    <property type="match status" value="1"/>
</dbReference>
<dbReference type="PANTHER" id="PTHR21090:SF5">
    <property type="entry name" value="PENTAFUNCTIONAL AROM POLYPEPTIDE"/>
    <property type="match status" value="1"/>
</dbReference>
<dbReference type="Pfam" id="PF01761">
    <property type="entry name" value="DHQ_synthase"/>
    <property type="match status" value="1"/>
</dbReference>
<dbReference type="Pfam" id="PF24621">
    <property type="entry name" value="DHQS_C"/>
    <property type="match status" value="1"/>
</dbReference>
<dbReference type="Pfam" id="PF01487">
    <property type="entry name" value="DHquinase_I"/>
    <property type="match status" value="1"/>
</dbReference>
<dbReference type="Pfam" id="PF00275">
    <property type="entry name" value="EPSP_synthase"/>
    <property type="match status" value="1"/>
</dbReference>
<dbReference type="Pfam" id="PF18317">
    <property type="entry name" value="SDH_C"/>
    <property type="match status" value="1"/>
</dbReference>
<dbReference type="Pfam" id="PF08501">
    <property type="entry name" value="Shikimate_dh_N"/>
    <property type="match status" value="1"/>
</dbReference>
<dbReference type="Pfam" id="PF01202">
    <property type="entry name" value="SKI"/>
    <property type="match status" value="1"/>
</dbReference>
<dbReference type="PIRSF" id="PIRSF000514">
    <property type="entry name" value="Pentafunct_AroM"/>
    <property type="match status" value="1"/>
</dbReference>
<dbReference type="PRINTS" id="PR01100">
    <property type="entry name" value="SHIKIMTKNASE"/>
</dbReference>
<dbReference type="SUPFAM" id="SSF51569">
    <property type="entry name" value="Aldolase"/>
    <property type="match status" value="1"/>
</dbReference>
<dbReference type="SUPFAM" id="SSF53223">
    <property type="entry name" value="Aminoacid dehydrogenase-like, N-terminal domain"/>
    <property type="match status" value="1"/>
</dbReference>
<dbReference type="SUPFAM" id="SSF56796">
    <property type="entry name" value="Dehydroquinate synthase-like"/>
    <property type="match status" value="1"/>
</dbReference>
<dbReference type="SUPFAM" id="SSF55205">
    <property type="entry name" value="EPT/RTPC-like"/>
    <property type="match status" value="1"/>
</dbReference>
<dbReference type="SUPFAM" id="SSF51735">
    <property type="entry name" value="NAD(P)-binding Rossmann-fold domains"/>
    <property type="match status" value="1"/>
</dbReference>
<dbReference type="SUPFAM" id="SSF52540">
    <property type="entry name" value="P-loop containing nucleoside triphosphate hydrolases"/>
    <property type="match status" value="1"/>
</dbReference>
<dbReference type="PROSITE" id="PS01028">
    <property type="entry name" value="DEHYDROQUINASE_I"/>
    <property type="match status" value="1"/>
</dbReference>
<dbReference type="PROSITE" id="PS00104">
    <property type="entry name" value="EPSP_SYNTHASE_1"/>
    <property type="match status" value="1"/>
</dbReference>
<dbReference type="PROSITE" id="PS00885">
    <property type="entry name" value="EPSP_SYNTHASE_2"/>
    <property type="match status" value="1"/>
</dbReference>
<dbReference type="PROSITE" id="PS01128">
    <property type="entry name" value="SHIKIMATE_KINASE"/>
    <property type="match status" value="1"/>
</dbReference>
<proteinExistence type="inferred from homology"/>
<name>ARO1_COCP7</name>
<accession>C5PA86</accession>
<feature type="chain" id="PRO_0000406714" description="Pentafunctional AROM polypeptide">
    <location>
        <begin position="1"/>
        <end position="1589"/>
    </location>
</feature>
<feature type="region of interest" description="3-dehydroquinate synthase">
    <location>
        <begin position="1"/>
        <end position="384"/>
    </location>
</feature>
<feature type="region of interest" description="EPSP synthase">
    <location>
        <begin position="397"/>
        <end position="841"/>
    </location>
</feature>
<feature type="region of interest" description="Shikimate kinase">
    <location>
        <begin position="861"/>
        <end position="1052"/>
    </location>
</feature>
<feature type="region of interest" description="3-dehydroquinase">
    <location>
        <begin position="1053"/>
        <end position="1273"/>
    </location>
</feature>
<feature type="region of interest" description="Shikimate dehydrogenase">
    <location>
        <begin position="1286"/>
        <end position="1589"/>
    </location>
</feature>
<feature type="active site" description="Proton acceptor; for 3-dehydroquinate synthase activity" evidence="1">
    <location>
        <position position="260"/>
    </location>
</feature>
<feature type="active site" description="Proton acceptor; for 3-dehydroquinate synthase activity" evidence="1">
    <location>
        <position position="275"/>
    </location>
</feature>
<feature type="active site" description="For EPSP synthase activity" evidence="1">
    <location>
        <position position="823"/>
    </location>
</feature>
<feature type="active site" description="Proton acceptor; for 3-dehydroquinate dehydratase activity" evidence="1">
    <location>
        <position position="1176"/>
    </location>
</feature>
<feature type="active site" description="Schiff-base intermediate with substrate; for 3-dehydroquinate dehydratase activity" evidence="1">
    <location>
        <position position="1204"/>
    </location>
</feature>
<feature type="binding site" evidence="1">
    <location>
        <begin position="44"/>
        <end position="46"/>
    </location>
    <ligand>
        <name>NAD(+)</name>
        <dbReference type="ChEBI" id="CHEBI:57540"/>
    </ligand>
</feature>
<feature type="binding site" evidence="1">
    <location>
        <begin position="81"/>
        <end position="84"/>
    </location>
    <ligand>
        <name>NAD(+)</name>
        <dbReference type="ChEBI" id="CHEBI:57540"/>
    </ligand>
</feature>
<feature type="binding site" evidence="1">
    <location>
        <begin position="114"/>
        <end position="116"/>
    </location>
    <ligand>
        <name>NAD(+)</name>
        <dbReference type="ChEBI" id="CHEBI:57540"/>
    </ligand>
</feature>
<feature type="binding site" evidence="1">
    <location>
        <position position="119"/>
    </location>
    <ligand>
        <name>NAD(+)</name>
        <dbReference type="ChEBI" id="CHEBI:57540"/>
    </ligand>
</feature>
<feature type="binding site" evidence="1">
    <location>
        <position position="130"/>
    </location>
    <ligand>
        <name>7-phospho-2-dehydro-3-deoxy-D-arabino-heptonate</name>
        <dbReference type="ChEBI" id="CHEBI:58394"/>
    </ligand>
</feature>
<feature type="binding site" evidence="1">
    <location>
        <begin position="139"/>
        <end position="140"/>
    </location>
    <ligand>
        <name>NAD(+)</name>
        <dbReference type="ChEBI" id="CHEBI:57540"/>
    </ligand>
</feature>
<feature type="binding site" evidence="1">
    <location>
        <position position="146"/>
    </location>
    <ligand>
        <name>7-phospho-2-dehydro-3-deoxy-D-arabino-heptonate</name>
        <dbReference type="ChEBI" id="CHEBI:58394"/>
    </ligand>
</feature>
<feature type="binding site" evidence="1">
    <location>
        <position position="152"/>
    </location>
    <ligand>
        <name>7-phospho-2-dehydro-3-deoxy-D-arabino-heptonate</name>
        <dbReference type="ChEBI" id="CHEBI:58394"/>
    </ligand>
</feature>
<feature type="binding site" evidence="1">
    <location>
        <position position="161"/>
    </location>
    <ligand>
        <name>NAD(+)</name>
        <dbReference type="ChEBI" id="CHEBI:57540"/>
    </ligand>
</feature>
<feature type="binding site" evidence="1">
    <location>
        <position position="162"/>
    </location>
    <ligand>
        <name>7-phospho-2-dehydro-3-deoxy-D-arabino-heptonate</name>
        <dbReference type="ChEBI" id="CHEBI:58394"/>
    </ligand>
</feature>
<feature type="binding site" evidence="1">
    <location>
        <begin position="179"/>
        <end position="182"/>
    </location>
    <ligand>
        <name>NAD(+)</name>
        <dbReference type="ChEBI" id="CHEBI:57540"/>
    </ligand>
</feature>
<feature type="binding site" evidence="1">
    <location>
        <position position="190"/>
    </location>
    <ligand>
        <name>NAD(+)</name>
        <dbReference type="ChEBI" id="CHEBI:57540"/>
    </ligand>
</feature>
<feature type="binding site" evidence="1">
    <location>
        <begin position="194"/>
        <end position="197"/>
    </location>
    <ligand>
        <name>7-phospho-2-dehydro-3-deoxy-D-arabino-heptonate</name>
        <dbReference type="ChEBI" id="CHEBI:58394"/>
    </ligand>
</feature>
<feature type="binding site" evidence="1">
    <location>
        <position position="194"/>
    </location>
    <ligand>
        <name>Zn(2+)</name>
        <dbReference type="ChEBI" id="CHEBI:29105"/>
        <note>catalytic</note>
    </ligand>
</feature>
<feature type="binding site" evidence="1">
    <location>
        <position position="250"/>
    </location>
    <ligand>
        <name>7-phospho-2-dehydro-3-deoxy-D-arabino-heptonate</name>
        <dbReference type="ChEBI" id="CHEBI:58394"/>
    </ligand>
</feature>
<feature type="binding site" evidence="1">
    <location>
        <begin position="264"/>
        <end position="268"/>
    </location>
    <ligand>
        <name>7-phospho-2-dehydro-3-deoxy-D-arabino-heptonate</name>
        <dbReference type="ChEBI" id="CHEBI:58394"/>
    </ligand>
</feature>
<feature type="binding site" evidence="1">
    <location>
        <position position="271"/>
    </location>
    <ligand>
        <name>7-phospho-2-dehydro-3-deoxy-D-arabino-heptonate</name>
        <dbReference type="ChEBI" id="CHEBI:58394"/>
    </ligand>
</feature>
<feature type="binding site" evidence="1">
    <location>
        <position position="271"/>
    </location>
    <ligand>
        <name>Zn(2+)</name>
        <dbReference type="ChEBI" id="CHEBI:29105"/>
        <note>catalytic</note>
    </ligand>
</feature>
<feature type="binding site" evidence="1">
    <location>
        <position position="287"/>
    </location>
    <ligand>
        <name>7-phospho-2-dehydro-3-deoxy-D-arabino-heptonate</name>
        <dbReference type="ChEBI" id="CHEBI:58394"/>
    </ligand>
</feature>
<feature type="binding site" evidence="1">
    <location>
        <position position="287"/>
    </location>
    <ligand>
        <name>Zn(2+)</name>
        <dbReference type="ChEBI" id="CHEBI:29105"/>
        <note>catalytic</note>
    </ligand>
</feature>
<feature type="binding site" evidence="1">
    <location>
        <position position="356"/>
    </location>
    <ligand>
        <name>7-phospho-2-dehydro-3-deoxy-D-arabino-heptonate</name>
        <dbReference type="ChEBI" id="CHEBI:58394"/>
    </ligand>
</feature>
<feature type="binding site" evidence="1">
    <location>
        <begin position="867"/>
        <end position="874"/>
    </location>
    <ligand>
        <name>ATP</name>
        <dbReference type="ChEBI" id="CHEBI:30616"/>
    </ligand>
</feature>
<gene>
    <name type="ORF">CPC735_008210</name>
</gene>
<evidence type="ECO:0000255" key="1">
    <source>
        <dbReference type="HAMAP-Rule" id="MF_03143"/>
    </source>
</evidence>
<organism>
    <name type="scientific">Coccidioides posadasii (strain C735)</name>
    <name type="common">Valley fever fungus</name>
    <dbReference type="NCBI Taxonomy" id="222929"/>
    <lineage>
        <taxon>Eukaryota</taxon>
        <taxon>Fungi</taxon>
        <taxon>Dikarya</taxon>
        <taxon>Ascomycota</taxon>
        <taxon>Pezizomycotina</taxon>
        <taxon>Eurotiomycetes</taxon>
        <taxon>Eurotiomycetidae</taxon>
        <taxon>Onygenales</taxon>
        <taxon>Onygenaceae</taxon>
        <taxon>Coccidioides</taxon>
    </lineage>
</organism>
<reference key="1">
    <citation type="journal article" date="2009" name="Genome Res.">
        <title>Comparative genomic analyses of the human fungal pathogens Coccidioides and their relatives.</title>
        <authorList>
            <person name="Sharpton T.J."/>
            <person name="Stajich J.E."/>
            <person name="Rounsley S.D."/>
            <person name="Gardner M.J."/>
            <person name="Wortman J.R."/>
            <person name="Jordar V.S."/>
            <person name="Maiti R."/>
            <person name="Kodira C.D."/>
            <person name="Neafsey D.E."/>
            <person name="Zeng Q."/>
            <person name="Hung C.-Y."/>
            <person name="McMahan C."/>
            <person name="Muszewska A."/>
            <person name="Grynberg M."/>
            <person name="Mandel M.A."/>
            <person name="Kellner E.M."/>
            <person name="Barker B.M."/>
            <person name="Galgiani J.N."/>
            <person name="Orbach M.J."/>
            <person name="Kirkland T.N."/>
            <person name="Cole G.T."/>
            <person name="Henn M.R."/>
            <person name="Birren B.W."/>
            <person name="Taylor J.W."/>
        </authorList>
    </citation>
    <scope>NUCLEOTIDE SEQUENCE [LARGE SCALE GENOMIC DNA]</scope>
    <source>
        <strain>C735</strain>
    </source>
</reference>